<feature type="chain" id="PRO_0000342886" description="Calmodulin-like protein 3">
    <location>
        <begin position="1"/>
        <end position="153"/>
    </location>
</feature>
<feature type="domain" description="EF-hand 1" evidence="2">
    <location>
        <begin position="1"/>
        <end position="36"/>
    </location>
</feature>
<feature type="domain" description="EF-hand 2" evidence="2">
    <location>
        <begin position="37"/>
        <end position="72"/>
    </location>
</feature>
<feature type="domain" description="EF-hand 3" evidence="2">
    <location>
        <begin position="74"/>
        <end position="109"/>
    </location>
</feature>
<feature type="domain" description="EF-hand 4" evidence="2">
    <location>
        <begin position="112"/>
        <end position="147"/>
    </location>
</feature>
<feature type="binding site" evidence="2">
    <location>
        <position position="14"/>
    </location>
    <ligand>
        <name>Ca(2+)</name>
        <dbReference type="ChEBI" id="CHEBI:29108"/>
        <label>1</label>
    </ligand>
</feature>
<feature type="binding site" evidence="2">
    <location>
        <position position="16"/>
    </location>
    <ligand>
        <name>Ca(2+)</name>
        <dbReference type="ChEBI" id="CHEBI:29108"/>
        <label>1</label>
    </ligand>
</feature>
<feature type="binding site" evidence="2">
    <location>
        <position position="18"/>
    </location>
    <ligand>
        <name>Ca(2+)</name>
        <dbReference type="ChEBI" id="CHEBI:29108"/>
        <label>1</label>
    </ligand>
</feature>
<feature type="binding site" evidence="2">
    <location>
        <position position="20"/>
    </location>
    <ligand>
        <name>Ca(2+)</name>
        <dbReference type="ChEBI" id="CHEBI:29108"/>
        <label>1</label>
    </ligand>
</feature>
<feature type="binding site" evidence="2">
    <location>
        <position position="25"/>
    </location>
    <ligand>
        <name>Ca(2+)</name>
        <dbReference type="ChEBI" id="CHEBI:29108"/>
        <label>1</label>
    </ligand>
</feature>
<feature type="binding site" evidence="2">
    <location>
        <position position="50"/>
    </location>
    <ligand>
        <name>Ca(2+)</name>
        <dbReference type="ChEBI" id="CHEBI:29108"/>
        <label>2</label>
    </ligand>
</feature>
<feature type="binding site" evidence="2">
    <location>
        <position position="52"/>
    </location>
    <ligand>
        <name>Ca(2+)</name>
        <dbReference type="ChEBI" id="CHEBI:29108"/>
        <label>2</label>
    </ligand>
</feature>
<feature type="binding site" evidence="2">
    <location>
        <position position="54"/>
    </location>
    <ligand>
        <name>Ca(2+)</name>
        <dbReference type="ChEBI" id="CHEBI:29108"/>
        <label>2</label>
    </ligand>
</feature>
<feature type="binding site" evidence="2">
    <location>
        <position position="56"/>
    </location>
    <ligand>
        <name>Ca(2+)</name>
        <dbReference type="ChEBI" id="CHEBI:29108"/>
        <label>2</label>
    </ligand>
</feature>
<feature type="binding site" evidence="2">
    <location>
        <position position="61"/>
    </location>
    <ligand>
        <name>Ca(2+)</name>
        <dbReference type="ChEBI" id="CHEBI:29108"/>
        <label>2</label>
    </ligand>
</feature>
<feature type="binding site" evidence="2">
    <location>
        <position position="87"/>
    </location>
    <ligand>
        <name>Ca(2+)</name>
        <dbReference type="ChEBI" id="CHEBI:29108"/>
        <label>3</label>
    </ligand>
</feature>
<feature type="binding site" evidence="2">
    <location>
        <position position="89"/>
    </location>
    <ligand>
        <name>Ca(2+)</name>
        <dbReference type="ChEBI" id="CHEBI:29108"/>
        <label>3</label>
    </ligand>
</feature>
<feature type="binding site" evidence="2">
    <location>
        <position position="91"/>
    </location>
    <ligand>
        <name>Ca(2+)</name>
        <dbReference type="ChEBI" id="CHEBI:29108"/>
        <label>3</label>
    </ligand>
</feature>
<feature type="binding site" evidence="2">
    <location>
        <position position="98"/>
    </location>
    <ligand>
        <name>Ca(2+)</name>
        <dbReference type="ChEBI" id="CHEBI:29108"/>
        <label>3</label>
    </ligand>
</feature>
<feature type="binding site" evidence="2">
    <location>
        <position position="125"/>
    </location>
    <ligand>
        <name>Ca(2+)</name>
        <dbReference type="ChEBI" id="CHEBI:29108"/>
        <label>4</label>
    </ligand>
</feature>
<feature type="binding site" evidence="2">
    <location>
        <position position="127"/>
    </location>
    <ligand>
        <name>Ca(2+)</name>
        <dbReference type="ChEBI" id="CHEBI:29108"/>
        <label>4</label>
    </ligand>
</feature>
<feature type="binding site" evidence="2">
    <location>
        <position position="129"/>
    </location>
    <ligand>
        <name>Ca(2+)</name>
        <dbReference type="ChEBI" id="CHEBI:29108"/>
        <label>4</label>
    </ligand>
</feature>
<feature type="binding site" evidence="2">
    <location>
        <position position="131"/>
    </location>
    <ligand>
        <name>Ca(2+)</name>
        <dbReference type="ChEBI" id="CHEBI:29108"/>
        <label>4</label>
    </ligand>
</feature>
<feature type="binding site" evidence="2">
    <location>
        <position position="136"/>
    </location>
    <ligand>
        <name>Ca(2+)</name>
        <dbReference type="ChEBI" id="CHEBI:29108"/>
        <label>4</label>
    </ligand>
</feature>
<dbReference type="EMBL" id="AC009853">
    <property type="protein sequence ID" value="AAF02168.1"/>
    <property type="molecule type" value="Genomic_DNA"/>
</dbReference>
<dbReference type="EMBL" id="CP002686">
    <property type="protein sequence ID" value="AEE74549.1"/>
    <property type="molecule type" value="Genomic_DNA"/>
</dbReference>
<dbReference type="SMR" id="Q9SRR7"/>
<dbReference type="FunCoup" id="Q9SRR7">
    <property type="interactions" value="204"/>
</dbReference>
<dbReference type="STRING" id="3702.Q9SRR7"/>
<dbReference type="PaxDb" id="3702-AT3G07490.1"/>
<dbReference type="ProteomicsDB" id="241052"/>
<dbReference type="EnsemblPlants" id="AT3G07490.1">
    <property type="protein sequence ID" value="AT3G07490.1"/>
    <property type="gene ID" value="AT3G07490"/>
</dbReference>
<dbReference type="GeneID" id="819937"/>
<dbReference type="Gramene" id="AT3G07490.1">
    <property type="protein sequence ID" value="AT3G07490.1"/>
    <property type="gene ID" value="AT3G07490"/>
</dbReference>
<dbReference type="KEGG" id="ath:AT3G07490"/>
<dbReference type="Araport" id="AT3G07490"/>
<dbReference type="TAIR" id="AT3G07490">
    <property type="gene designation" value="AGD11"/>
</dbReference>
<dbReference type="eggNOG" id="KOG0027">
    <property type="taxonomic scope" value="Eukaryota"/>
</dbReference>
<dbReference type="HOGENOM" id="CLU_061288_20_3_1"/>
<dbReference type="InParanoid" id="Q9SRR7"/>
<dbReference type="OMA" id="ENMGIFM"/>
<dbReference type="PhylomeDB" id="Q9SRR7"/>
<dbReference type="PRO" id="PR:Q9SRR7"/>
<dbReference type="Proteomes" id="UP000006548">
    <property type="component" value="Chromosome 3"/>
</dbReference>
<dbReference type="ExpressionAtlas" id="Q9SRR7">
    <property type="expression patterns" value="baseline and differential"/>
</dbReference>
<dbReference type="GO" id="GO:0005777">
    <property type="term" value="C:peroxisome"/>
    <property type="evidence" value="ECO:0000314"/>
    <property type="project" value="TAIR"/>
</dbReference>
<dbReference type="GO" id="GO:0005509">
    <property type="term" value="F:calcium ion binding"/>
    <property type="evidence" value="ECO:0007669"/>
    <property type="project" value="InterPro"/>
</dbReference>
<dbReference type="CDD" id="cd00051">
    <property type="entry name" value="EFh"/>
    <property type="match status" value="2"/>
</dbReference>
<dbReference type="FunFam" id="1.10.238.10:FF:000231">
    <property type="entry name" value="Calmodulin-like protein 3"/>
    <property type="match status" value="1"/>
</dbReference>
<dbReference type="FunFam" id="1.10.238.10:FF:000089">
    <property type="entry name" value="calmodulin-like protein 3"/>
    <property type="match status" value="1"/>
</dbReference>
<dbReference type="Gene3D" id="1.10.238.10">
    <property type="entry name" value="EF-hand"/>
    <property type="match status" value="2"/>
</dbReference>
<dbReference type="InterPro" id="IPR011992">
    <property type="entry name" value="EF-hand-dom_pair"/>
</dbReference>
<dbReference type="InterPro" id="IPR018247">
    <property type="entry name" value="EF_Hand_1_Ca_BS"/>
</dbReference>
<dbReference type="InterPro" id="IPR002048">
    <property type="entry name" value="EF_hand_dom"/>
</dbReference>
<dbReference type="InterPro" id="IPR039647">
    <property type="entry name" value="EF_hand_pair_protein_CML-like"/>
</dbReference>
<dbReference type="PANTHER" id="PTHR10891">
    <property type="entry name" value="EF-HAND CALCIUM-BINDING DOMAIN CONTAINING PROTEIN"/>
    <property type="match status" value="1"/>
</dbReference>
<dbReference type="Pfam" id="PF13499">
    <property type="entry name" value="EF-hand_7"/>
    <property type="match status" value="2"/>
</dbReference>
<dbReference type="PRINTS" id="PR01697">
    <property type="entry name" value="PARVALBUMIN"/>
</dbReference>
<dbReference type="SMART" id="SM00054">
    <property type="entry name" value="EFh"/>
    <property type="match status" value="4"/>
</dbReference>
<dbReference type="SUPFAM" id="SSF47473">
    <property type="entry name" value="EF-hand"/>
    <property type="match status" value="1"/>
</dbReference>
<dbReference type="PROSITE" id="PS00018">
    <property type="entry name" value="EF_HAND_1"/>
    <property type="match status" value="4"/>
</dbReference>
<dbReference type="PROSITE" id="PS50222">
    <property type="entry name" value="EF_HAND_2"/>
    <property type="match status" value="4"/>
</dbReference>
<accession>Q9SRR7</accession>
<sequence length="153" mass="17393">MDQAELARIFQMFDRNGDGKITKQELNDSLENLGIYIPDKDLVQMIEKIDLNGDGYVDIEEFGGLYQTIMEERDEEEDMREAFNVFDQNRDGFITVEELRSVLASLGLKQGRTLEDCKRMISKVDVDGDGMVNFKEFKQMMKGGGFAALGSNL</sequence>
<protein>
    <recommendedName>
        <fullName>Calmodulin-like protein 3</fullName>
    </recommendedName>
</protein>
<organism>
    <name type="scientific">Arabidopsis thaliana</name>
    <name type="common">Mouse-ear cress</name>
    <dbReference type="NCBI Taxonomy" id="3702"/>
    <lineage>
        <taxon>Eukaryota</taxon>
        <taxon>Viridiplantae</taxon>
        <taxon>Streptophyta</taxon>
        <taxon>Embryophyta</taxon>
        <taxon>Tracheophyta</taxon>
        <taxon>Spermatophyta</taxon>
        <taxon>Magnoliopsida</taxon>
        <taxon>eudicotyledons</taxon>
        <taxon>Gunneridae</taxon>
        <taxon>Pentapetalae</taxon>
        <taxon>rosids</taxon>
        <taxon>malvids</taxon>
        <taxon>Brassicales</taxon>
        <taxon>Brassicaceae</taxon>
        <taxon>Camelineae</taxon>
        <taxon>Arabidopsis</taxon>
    </lineage>
</organism>
<evidence type="ECO:0000250" key="1"/>
<evidence type="ECO:0000255" key="2">
    <source>
        <dbReference type="PROSITE-ProRule" id="PRU00448"/>
    </source>
</evidence>
<evidence type="ECO:0000305" key="3"/>
<keyword id="KW-0106">Calcium</keyword>
<keyword id="KW-0479">Metal-binding</keyword>
<keyword id="KW-1185">Reference proteome</keyword>
<keyword id="KW-0677">Repeat</keyword>
<comment type="function">
    <text evidence="1">Potential calcium sensor.</text>
</comment>
<comment type="similarity">
    <text evidence="3">Belongs to the calmodulin family.</text>
</comment>
<proteinExistence type="evidence at transcript level"/>
<gene>
    <name type="primary">CML3</name>
    <name type="ordered locus">At3g07490</name>
    <name type="ORF">F21O3.20</name>
</gene>
<reference key="1">
    <citation type="journal article" date="2000" name="Nature">
        <title>Sequence and analysis of chromosome 3 of the plant Arabidopsis thaliana.</title>
        <authorList>
            <person name="Salanoubat M."/>
            <person name="Lemcke K."/>
            <person name="Rieger M."/>
            <person name="Ansorge W."/>
            <person name="Unseld M."/>
            <person name="Fartmann B."/>
            <person name="Valle G."/>
            <person name="Bloecker H."/>
            <person name="Perez-Alonso M."/>
            <person name="Obermaier B."/>
            <person name="Delseny M."/>
            <person name="Boutry M."/>
            <person name="Grivell L.A."/>
            <person name="Mache R."/>
            <person name="Puigdomenech P."/>
            <person name="De Simone V."/>
            <person name="Choisne N."/>
            <person name="Artiguenave F."/>
            <person name="Robert C."/>
            <person name="Brottier P."/>
            <person name="Wincker P."/>
            <person name="Cattolico L."/>
            <person name="Weissenbach J."/>
            <person name="Saurin W."/>
            <person name="Quetier F."/>
            <person name="Schaefer M."/>
            <person name="Mueller-Auer S."/>
            <person name="Gabel C."/>
            <person name="Fuchs M."/>
            <person name="Benes V."/>
            <person name="Wurmbach E."/>
            <person name="Drzonek H."/>
            <person name="Erfle H."/>
            <person name="Jordan N."/>
            <person name="Bangert S."/>
            <person name="Wiedelmann R."/>
            <person name="Kranz H."/>
            <person name="Voss H."/>
            <person name="Holland R."/>
            <person name="Brandt P."/>
            <person name="Nyakatura G."/>
            <person name="Vezzi A."/>
            <person name="D'Angelo M."/>
            <person name="Pallavicini A."/>
            <person name="Toppo S."/>
            <person name="Simionati B."/>
            <person name="Conrad A."/>
            <person name="Hornischer K."/>
            <person name="Kauer G."/>
            <person name="Loehnert T.-H."/>
            <person name="Nordsiek G."/>
            <person name="Reichelt J."/>
            <person name="Scharfe M."/>
            <person name="Schoen O."/>
            <person name="Bargues M."/>
            <person name="Terol J."/>
            <person name="Climent J."/>
            <person name="Navarro P."/>
            <person name="Collado C."/>
            <person name="Perez-Perez A."/>
            <person name="Ottenwaelder B."/>
            <person name="Duchemin D."/>
            <person name="Cooke R."/>
            <person name="Laudie M."/>
            <person name="Berger-Llauro C."/>
            <person name="Purnelle B."/>
            <person name="Masuy D."/>
            <person name="de Haan M."/>
            <person name="Maarse A.C."/>
            <person name="Alcaraz J.-P."/>
            <person name="Cottet A."/>
            <person name="Casacuberta E."/>
            <person name="Monfort A."/>
            <person name="Argiriou A."/>
            <person name="Flores M."/>
            <person name="Liguori R."/>
            <person name="Vitale D."/>
            <person name="Mannhaupt G."/>
            <person name="Haase D."/>
            <person name="Schoof H."/>
            <person name="Rudd S."/>
            <person name="Zaccaria P."/>
            <person name="Mewes H.-W."/>
            <person name="Mayer K.F.X."/>
            <person name="Kaul S."/>
            <person name="Town C.D."/>
            <person name="Koo H.L."/>
            <person name="Tallon L.J."/>
            <person name="Jenkins J."/>
            <person name="Rooney T."/>
            <person name="Rizzo M."/>
            <person name="Walts A."/>
            <person name="Utterback T."/>
            <person name="Fujii C.Y."/>
            <person name="Shea T.P."/>
            <person name="Creasy T.H."/>
            <person name="Haas B."/>
            <person name="Maiti R."/>
            <person name="Wu D."/>
            <person name="Peterson J."/>
            <person name="Van Aken S."/>
            <person name="Pai G."/>
            <person name="Militscher J."/>
            <person name="Sellers P."/>
            <person name="Gill J.E."/>
            <person name="Feldblyum T.V."/>
            <person name="Preuss D."/>
            <person name="Lin X."/>
            <person name="Nierman W.C."/>
            <person name="Salzberg S.L."/>
            <person name="White O."/>
            <person name="Venter J.C."/>
            <person name="Fraser C.M."/>
            <person name="Kaneko T."/>
            <person name="Nakamura Y."/>
            <person name="Sato S."/>
            <person name="Kato T."/>
            <person name="Asamizu E."/>
            <person name="Sasamoto S."/>
            <person name="Kimura T."/>
            <person name="Idesawa K."/>
            <person name="Kawashima K."/>
            <person name="Kishida Y."/>
            <person name="Kiyokawa C."/>
            <person name="Kohara M."/>
            <person name="Matsumoto M."/>
            <person name="Matsuno A."/>
            <person name="Muraki A."/>
            <person name="Nakayama S."/>
            <person name="Nakazaki N."/>
            <person name="Shinpo S."/>
            <person name="Takeuchi C."/>
            <person name="Wada T."/>
            <person name="Watanabe A."/>
            <person name="Yamada M."/>
            <person name="Yasuda M."/>
            <person name="Tabata S."/>
        </authorList>
    </citation>
    <scope>NUCLEOTIDE SEQUENCE [LARGE SCALE GENOMIC DNA]</scope>
    <source>
        <strain>cv. Columbia</strain>
    </source>
</reference>
<reference key="2">
    <citation type="journal article" date="2017" name="Plant J.">
        <title>Araport11: a complete reannotation of the Arabidopsis thaliana reference genome.</title>
        <authorList>
            <person name="Cheng C.Y."/>
            <person name="Krishnakumar V."/>
            <person name="Chan A.P."/>
            <person name="Thibaud-Nissen F."/>
            <person name="Schobel S."/>
            <person name="Town C.D."/>
        </authorList>
    </citation>
    <scope>GENOME REANNOTATION</scope>
    <source>
        <strain>cv. Columbia</strain>
    </source>
</reference>
<reference key="3">
    <citation type="journal article" date="2003" name="New Phytol.">
        <title>Calmodulins and related potential calcium sensors of Arabidopsis.</title>
        <authorList>
            <person name="McCormack E."/>
            <person name="Braam J."/>
        </authorList>
    </citation>
    <scope>GENE FAMILY</scope>
    <scope>NOMENCLATURE</scope>
</reference>
<name>CML3_ARATH</name>